<protein>
    <recommendedName>
        <fullName evidence="1">Malonyl-[acyl-carrier protein] O-methyltransferase</fullName>
        <shortName evidence="1">Malonyl-ACP O-methyltransferase</shortName>
        <ecNumber evidence="1">2.1.1.197</ecNumber>
    </recommendedName>
    <alternativeName>
        <fullName evidence="1">Biotin synthesis protein BioC</fullName>
    </alternativeName>
</protein>
<dbReference type="EC" id="2.1.1.197" evidence="1"/>
<dbReference type="EMBL" id="AE015924">
    <property type="protein sequence ID" value="AAQ66647.1"/>
    <property type="molecule type" value="Genomic_DNA"/>
</dbReference>
<dbReference type="RefSeq" id="WP_005874660.1">
    <property type="nucleotide sequence ID" value="NC_002950.2"/>
</dbReference>
<dbReference type="SMR" id="Q7MUB2"/>
<dbReference type="STRING" id="242619.PG_1619"/>
<dbReference type="EnsemblBacteria" id="AAQ66647">
    <property type="protein sequence ID" value="AAQ66647"/>
    <property type="gene ID" value="PG_1619"/>
</dbReference>
<dbReference type="KEGG" id="pgi:PG_1619"/>
<dbReference type="eggNOG" id="COG0500">
    <property type="taxonomic scope" value="Bacteria"/>
</dbReference>
<dbReference type="HOGENOM" id="CLU_046586_1_0_10"/>
<dbReference type="UniPathway" id="UPA00078"/>
<dbReference type="Proteomes" id="UP000000588">
    <property type="component" value="Chromosome"/>
</dbReference>
<dbReference type="GO" id="GO:0010340">
    <property type="term" value="F:carboxyl-O-methyltransferase activity"/>
    <property type="evidence" value="ECO:0007669"/>
    <property type="project" value="UniProtKB-UniRule"/>
</dbReference>
<dbReference type="GO" id="GO:0102130">
    <property type="term" value="F:malonyl-CoA methyltransferase activity"/>
    <property type="evidence" value="ECO:0007669"/>
    <property type="project" value="UniProtKB-EC"/>
</dbReference>
<dbReference type="GO" id="GO:0009102">
    <property type="term" value="P:biotin biosynthetic process"/>
    <property type="evidence" value="ECO:0007669"/>
    <property type="project" value="UniProtKB-UniRule"/>
</dbReference>
<dbReference type="GO" id="GO:0032259">
    <property type="term" value="P:methylation"/>
    <property type="evidence" value="ECO:0007669"/>
    <property type="project" value="UniProtKB-KW"/>
</dbReference>
<dbReference type="CDD" id="cd02440">
    <property type="entry name" value="AdoMet_MTases"/>
    <property type="match status" value="1"/>
</dbReference>
<dbReference type="Gene3D" id="3.40.50.150">
    <property type="entry name" value="Vaccinia Virus protein VP39"/>
    <property type="match status" value="1"/>
</dbReference>
<dbReference type="HAMAP" id="MF_00835">
    <property type="entry name" value="BioC"/>
    <property type="match status" value="1"/>
</dbReference>
<dbReference type="InterPro" id="IPR011814">
    <property type="entry name" value="BioC"/>
</dbReference>
<dbReference type="InterPro" id="IPR050602">
    <property type="entry name" value="Malonyl-ACP_OMT"/>
</dbReference>
<dbReference type="InterPro" id="IPR029063">
    <property type="entry name" value="SAM-dependent_MTases_sf"/>
</dbReference>
<dbReference type="NCBIfam" id="TIGR02072">
    <property type="entry name" value="BioC"/>
    <property type="match status" value="1"/>
</dbReference>
<dbReference type="PANTHER" id="PTHR13090">
    <property type="entry name" value="ARGININE-HYDROXYLASE NDUFAF5, MITOCHONDRIAL"/>
    <property type="match status" value="1"/>
</dbReference>
<dbReference type="PANTHER" id="PTHR13090:SF1">
    <property type="entry name" value="ARGININE-HYDROXYLASE NDUFAF5, MITOCHONDRIAL"/>
    <property type="match status" value="1"/>
</dbReference>
<dbReference type="Pfam" id="PF13489">
    <property type="entry name" value="Methyltransf_23"/>
    <property type="match status" value="1"/>
</dbReference>
<dbReference type="SUPFAM" id="SSF53335">
    <property type="entry name" value="S-adenosyl-L-methionine-dependent methyltransferases"/>
    <property type="match status" value="1"/>
</dbReference>
<comment type="function">
    <text evidence="1">Converts the free carboxyl group of a malonyl-thioester to its methyl ester by transfer of a methyl group from S-adenosyl-L-methionine (SAM). It allows to synthesize pimeloyl-ACP via the fatty acid synthetic pathway.</text>
</comment>
<comment type="catalytic activity">
    <reaction evidence="1">
        <text>malonyl-[ACP] + S-adenosyl-L-methionine = malonyl-[ACP] methyl ester + S-adenosyl-L-homocysteine</text>
        <dbReference type="Rhea" id="RHEA:17105"/>
        <dbReference type="Rhea" id="RHEA-COMP:9623"/>
        <dbReference type="Rhea" id="RHEA-COMP:9954"/>
        <dbReference type="ChEBI" id="CHEBI:57856"/>
        <dbReference type="ChEBI" id="CHEBI:59789"/>
        <dbReference type="ChEBI" id="CHEBI:78449"/>
        <dbReference type="ChEBI" id="CHEBI:78845"/>
        <dbReference type="EC" id="2.1.1.197"/>
    </reaction>
</comment>
<comment type="pathway">
    <text evidence="1">Cofactor biosynthesis; biotin biosynthesis.</text>
</comment>
<comment type="similarity">
    <text evidence="1">Belongs to the methyltransferase superfamily.</text>
</comment>
<sequence length="255" mass="29227">MGAALELREVDSELVIKRFTSALPYYEKYAVAQHRIGERLADLLTATGRHHFEHVLEYGCGCGVYTRQLAQTVTVKQWTLNDLCPVCEEYIRVSPVSFYAGEAETMPHTDTYDLITSASAFQWFKDPESFIRTVAGLLRPDGIFLFNTFSPDNLPEIRTITNRGLHYPSTEALMKWLGAAFSAVYKHEEQIVLTFDSPRDVLMHLKRTGVTATPRHEEVWTRSRLARFDQAYRERFSTPDGQVTLTYTPLYFLAK</sequence>
<feature type="chain" id="PRO_0000412517" description="Malonyl-[acyl-carrier protein] O-methyltransferase">
    <location>
        <begin position="1"/>
        <end position="255"/>
    </location>
</feature>
<reference key="1">
    <citation type="journal article" date="2003" name="J. Bacteriol.">
        <title>Complete genome sequence of the oral pathogenic bacterium Porphyromonas gingivalis strain W83.</title>
        <authorList>
            <person name="Nelson K.E."/>
            <person name="Fleischmann R.D."/>
            <person name="DeBoy R.T."/>
            <person name="Paulsen I.T."/>
            <person name="Fouts D.E."/>
            <person name="Eisen J.A."/>
            <person name="Daugherty S.C."/>
            <person name="Dodson R.J."/>
            <person name="Durkin A.S."/>
            <person name="Gwinn M.L."/>
            <person name="Haft D.H."/>
            <person name="Kolonay J.F."/>
            <person name="Nelson W.C."/>
            <person name="Mason T.M."/>
            <person name="Tallon L."/>
            <person name="Gray J."/>
            <person name="Granger D."/>
            <person name="Tettelin H."/>
            <person name="Dong H."/>
            <person name="Galvin J.L."/>
            <person name="Duncan M.J."/>
            <person name="Dewhirst F.E."/>
            <person name="Fraser C.M."/>
        </authorList>
    </citation>
    <scope>NUCLEOTIDE SEQUENCE [LARGE SCALE GENOMIC DNA]</scope>
    <source>
        <strain>ATCC BAA-308 / W83</strain>
    </source>
</reference>
<proteinExistence type="inferred from homology"/>
<organism>
    <name type="scientific">Porphyromonas gingivalis (strain ATCC BAA-308 / W83)</name>
    <dbReference type="NCBI Taxonomy" id="242619"/>
    <lineage>
        <taxon>Bacteria</taxon>
        <taxon>Pseudomonadati</taxon>
        <taxon>Bacteroidota</taxon>
        <taxon>Bacteroidia</taxon>
        <taxon>Bacteroidales</taxon>
        <taxon>Porphyromonadaceae</taxon>
        <taxon>Porphyromonas</taxon>
    </lineage>
</organism>
<evidence type="ECO:0000255" key="1">
    <source>
        <dbReference type="HAMAP-Rule" id="MF_00835"/>
    </source>
</evidence>
<keyword id="KW-0093">Biotin biosynthesis</keyword>
<keyword id="KW-0489">Methyltransferase</keyword>
<keyword id="KW-1185">Reference proteome</keyword>
<keyword id="KW-0949">S-adenosyl-L-methionine</keyword>
<keyword id="KW-0808">Transferase</keyword>
<accession>Q7MUB2</accession>
<gene>
    <name evidence="1" type="primary">bioC</name>
    <name type="ordered locus">PG_1619</name>
</gene>
<name>BIOC_PORGI</name>